<name>L_SENDZ</name>
<protein>
    <recommendedName>
        <fullName>RNA-directed RNA polymerase L</fullName>
        <shortName>Protein L</shortName>
    </recommendedName>
    <alternativeName>
        <fullName>Large structural protein</fullName>
    </alternativeName>
    <alternativeName>
        <fullName>Replicase</fullName>
    </alternativeName>
    <alternativeName>
        <fullName>Transcriptase</fullName>
    </alternativeName>
    <domain>
        <recommendedName>
            <fullName>RNA-directed RNA polymerase</fullName>
            <ecNumber evidence="2">2.7.7.48</ecNumber>
        </recommendedName>
    </domain>
    <domain>
        <recommendedName>
            <fullName evidence="1">GTP phosphohydrolase</fullName>
            <ecNumber evidence="1">3.6.1.-</ecNumber>
        </recommendedName>
    </domain>
    <domain>
        <recommendedName>
            <fullName evidence="17">GDP polyribonucleotidyltransferase</fullName>
            <ecNumber evidence="1">2.7.7.88</ecNumber>
        </recommendedName>
        <alternativeName>
            <fullName evidence="17">PRNTase</fullName>
        </alternativeName>
    </domain>
    <domain>
        <recommendedName>
            <fullName evidence="17">mRNA cap methyltransferase</fullName>
            <ecNumber evidence="1">2.1.1.375</ecNumber>
        </recommendedName>
        <alternativeName>
            <fullName evidence="1">mRNA (guanine-N(7)-)-methyltransferase</fullName>
            <shortName evidence="1">G-N7-MTase</shortName>
        </alternativeName>
        <alternativeName>
            <fullName evidence="1">mRNA (nucleoside-2'-O-)-methyltransferase</fullName>
            <shortName evidence="1">N1-2'-O-MTase</shortName>
        </alternativeName>
    </domain>
</protein>
<sequence>MDGQESSQNPSDILYPECHLNSPIVRGKIAQLHVLLDVNQPYRLKDDSIINITKHKIRNGGLSPRQIKIRSLGKALQRTIKDLDRYTFEPYPTYSQELLRLDIPEICDKIRSVFAVSDRLTRELSSGFQDLWLNIFKQLGNIEGREGYDPLQDIGTIPEITDKYSRNRWYRPFLTWFSIKYDMRWMQKTRPGGPLDTSNSHNLLECKSYTLVTYGDLVMILNKLTLTGYILTPELVLMYCDVVEGRWNMSAAGHLDKKSIGITSKGEELWELVDSLFSSLGEEIYNVIALLEPLSLALIQLNDPVIPLRGAFMRHVLTELQTVLTSRDVYTDAEADTIVESLLAIFHGTSIDEKAEIFSFFRTFGHPSLEAVTAADKVRAHMYAQKAIKLKTLYECHAVFCTIIINGYRERHGGQWPPCDFPDHVCLELRNAQGSNTAISYECAVDNYTSFIGFKFRKFIEPQLDEDLTIYMKDKALSPRKEAWDSVYPDSNLYYKAPESEETRRLIEVFINDENFNPEEIINYVESGDWLKDEEFNISYSLKEKEIKQEGRLFAKMTYKMRAVQVLAETLLAKGIGELFRENGMVKGEIDLLKRLTTLSVSGVPRTDSVYNNSKSSEKRNEGMENKNSGGYWDEKKRSRHEFKATDSSTDGYETLSCFLTTDLKKYCLNWRFESTALFGQRCNEIFGFKTFFNWMHPVLERCTIYVGDPYCPVADRMHRQLQDHADSGIFIHNPRGGIEGYCQKLWTLISISAIHLAAVRVGVRVSAMVQGDNQAIAVTSRVPVAQTYKQKKNHVYEEITKYFGALRHVMFDVGHELKLNETIISSKMFVYSKRIYYDGKILPQCLKALTKCVFWSETLVDENRSACSNISTSIAKAIENGYSPILGYCIALYKTCQQVCISLGMTINPTISPTVRDQYFKGKNWLRCAVLIPANVGGFNYMSTSRCFVRNIGDPAVAALADLKRFIRADLLDKQVLYRVMNQEPGDSSFLDWASDPYSCNLPHSQSITTIIKNITARSVLQESPNPLLSGLFTETSGEEDLNLASFLMDRKVILPRVAHEILGNSLTGVREAIAGMLDTTKSLVRASVRKGGLSYGILRRLVNYDLLQYETLTRTLRKPVKDNIEYEYMCSVELAVGLRQKMWIHLTYGRPIHGLETPDPLELLRGIFIEGSEVCKLCRSEGADPIYTWFYLPDNIDLDTLTNGCPAIRIPYFGSATDERSEAQLGYVRNLSKPAKAAIRIAMVYTWAYGTDEISWMEAALIAQTRANLSLENLKLLTPVSTSTNLSHRLKDTATQMKFSSATLVRASRFITISNDNMALKEAGESKDTNLVYQQIMLTGLSLFEFNMRYKKGSLGKPLILHLHLNNGCCIMESPQEANIPPRSTLDLEITQENNKLIYDPDPLKDVDLELFSKVRDVVHTVDMTYWSDDEVIRATSICTAMTIADTMSQLDRDNLKEMIALVNDDDVNSLITEFMVIDVPLFCSTFGGILVNQFAYSLYGLNIRGREEIWGHVVRILKDTSHAVLKVLSNALSHPKIFKRFWNAGVVEPVYGPNLSNQDKILLALSVCEYSVDLFMHDWQGGVPLEIFICDNDPDVADMRRSSFLARHLAYLCSLAEISRDGPRLESMNSLERLESLKSYLELTFLDDPVLRYSQLTGLVIKVFPSTLTYIRKSSIKVLRTRGIGVPEVLEDWDPEADNALLDGIAAEIQQNIPLGHQTRAPFWGLRVSKSQVLRLRGYKEITRGEIGRSGVGLTLPFDGRYLSHQLRLFGINSTSCLKALELTYLLSPLVDKDKDRLYLGEGAGAMLSCYDATLGPCINYYNSGVYSCDVNGQRELNIYPAEVALVGKKLNNVTSLGQRVKVLFNGNPGSTWIGNDECEALIWNELQNSSIGLVHCDMEGGDHKDDQVVLHEHYSVIRIAYLVGDRDVVLISKIAPRLGTDWTRQLSLYLRYWDEVNLIVLKTSNPASTEMYLLSRHPKSDIIEDSKTVLASLLPLSKEDSIKIEKWILIEKAKAHEWVTRELREGSSSSGMLRPYHQALQTFGFEPNLYKLSRDFLSTMNIADTHNCMIAFNRVLKDTIFEWARITESDKRLKLTGKYDLYPVRDSGKLKTISRRLVLSWISLSMSTRLVTGSFPDQKFEARLQLGIVSLSSREIRNLRVITKTLLDRFEDIIHSITYRFLTKEIKILMKILGAVKMFGARQNEYTTVIDDGSLGDIEPYDSS</sequence>
<organismHost>
    <name type="scientific">Cavia cutleri</name>
    <name type="common">Guinea pig</name>
    <dbReference type="NCBI Taxonomy" id="10144"/>
</organismHost>
<organismHost>
    <name type="scientific">Cricetidae sp.</name>
    <name type="common">Hamster</name>
    <dbReference type="NCBI Taxonomy" id="36483"/>
</organismHost>
<organismHost>
    <name type="scientific">Mus musculus</name>
    <name type="common">Mouse</name>
    <dbReference type="NCBI Taxonomy" id="10090"/>
</organismHost>
<organismHost>
    <name type="scientific">Rattus norvegicus</name>
    <name type="common">Rat</name>
    <dbReference type="NCBI Taxonomy" id="10116"/>
</organismHost>
<dbReference type="EC" id="2.7.7.48" evidence="2"/>
<dbReference type="EC" id="3.6.1.-" evidence="1"/>
<dbReference type="EC" id="2.7.7.88" evidence="1"/>
<dbReference type="EC" id="2.1.1.375" evidence="1"/>
<dbReference type="EMBL" id="X03614">
    <property type="protein sequence ID" value="CAA27272.1"/>
    <property type="status" value="ALT_INIT"/>
    <property type="molecule type" value="Genomic_RNA"/>
</dbReference>
<dbReference type="EMBL" id="X03614">
    <property type="protein sequence ID" value="CAA27273.1"/>
    <property type="molecule type" value="Genomic_RNA"/>
</dbReference>
<dbReference type="EMBL" id="M30202">
    <property type="protein sequence ID" value="AAB06283.1"/>
    <property type="molecule type" value="Genomic_RNA"/>
</dbReference>
<dbReference type="EMBL" id="M30203">
    <property type="protein sequence ID" value="AAB06289.1"/>
    <property type="molecule type" value="Genomic_RNA"/>
</dbReference>
<dbReference type="EMBL" id="M30204">
    <property type="protein sequence ID" value="AAB06201.1"/>
    <property type="molecule type" value="Genomic_RNA"/>
</dbReference>
<dbReference type="EMBL" id="M69046">
    <property type="protein sequence ID" value="AAB06295.1"/>
    <property type="molecule type" value="Genomic_RNA"/>
</dbReference>
<dbReference type="PIR" id="A04120">
    <property type="entry name" value="ZLNZSV"/>
</dbReference>
<dbReference type="SMR" id="P06447"/>
<dbReference type="Proteomes" id="UP000110830">
    <property type="component" value="Genome"/>
</dbReference>
<dbReference type="Proteomes" id="UP000163956">
    <property type="component" value="Genome"/>
</dbReference>
<dbReference type="Proteomes" id="UP000169749">
    <property type="component" value="Genome"/>
</dbReference>
<dbReference type="Proteomes" id="UP000181310">
    <property type="component" value="Genome"/>
</dbReference>
<dbReference type="GO" id="GO:0030430">
    <property type="term" value="C:host cell cytoplasm"/>
    <property type="evidence" value="ECO:0007669"/>
    <property type="project" value="UniProtKB-SubCell"/>
</dbReference>
<dbReference type="GO" id="GO:0044423">
    <property type="term" value="C:virion component"/>
    <property type="evidence" value="ECO:0007669"/>
    <property type="project" value="UniProtKB-KW"/>
</dbReference>
<dbReference type="GO" id="GO:0005524">
    <property type="term" value="F:ATP binding"/>
    <property type="evidence" value="ECO:0007669"/>
    <property type="project" value="UniProtKB-KW"/>
</dbReference>
<dbReference type="GO" id="GO:0003924">
    <property type="term" value="F:GTPase activity"/>
    <property type="evidence" value="ECO:0007669"/>
    <property type="project" value="RHEA"/>
</dbReference>
<dbReference type="GO" id="GO:0004482">
    <property type="term" value="F:mRNA 5'-cap (guanine-N7-)-methyltransferase activity"/>
    <property type="evidence" value="ECO:0007669"/>
    <property type="project" value="InterPro"/>
</dbReference>
<dbReference type="GO" id="GO:0003968">
    <property type="term" value="F:RNA-directed RNA polymerase activity"/>
    <property type="evidence" value="ECO:0007669"/>
    <property type="project" value="UniProtKB-KW"/>
</dbReference>
<dbReference type="InterPro" id="IPR039736">
    <property type="entry name" value="L_poly_C"/>
</dbReference>
<dbReference type="InterPro" id="IPR026890">
    <property type="entry name" value="Mononeg_mRNAcap"/>
</dbReference>
<dbReference type="InterPro" id="IPR014023">
    <property type="entry name" value="Mononeg_RNA_pol_cat"/>
</dbReference>
<dbReference type="InterPro" id="IPR025786">
    <property type="entry name" value="Mononega_L_MeTrfase"/>
</dbReference>
<dbReference type="InterPro" id="IPR016269">
    <property type="entry name" value="RNA-dir_pol_paramyxovirus"/>
</dbReference>
<dbReference type="NCBIfam" id="TIGR04198">
    <property type="entry name" value="paramyx_RNAcap"/>
    <property type="match status" value="1"/>
</dbReference>
<dbReference type="Pfam" id="PF14318">
    <property type="entry name" value="Mononeg_mRNAcap"/>
    <property type="match status" value="1"/>
</dbReference>
<dbReference type="Pfam" id="PF00946">
    <property type="entry name" value="Mononeg_RNA_pol"/>
    <property type="match status" value="1"/>
</dbReference>
<dbReference type="PIRSF" id="PIRSF000830">
    <property type="entry name" value="RNA_pol_ParamyxoV"/>
    <property type="match status" value="1"/>
</dbReference>
<dbReference type="PROSITE" id="PS50526">
    <property type="entry name" value="RDRP_SSRNA_NEG_NONSEG"/>
    <property type="match status" value="1"/>
</dbReference>
<dbReference type="PROSITE" id="PS51590">
    <property type="entry name" value="SAM_MT_MNV_L"/>
    <property type="match status" value="1"/>
</dbReference>
<keyword id="KW-0067">ATP-binding</keyword>
<keyword id="KW-1035">Host cytoplasm</keyword>
<keyword id="KW-0378">Hydrolase</keyword>
<keyword id="KW-0489">Methyltransferase</keyword>
<keyword id="KW-0506">mRNA capping</keyword>
<keyword id="KW-0507">mRNA processing</keyword>
<keyword id="KW-0511">Multifunctional enzyme</keyword>
<keyword id="KW-0547">Nucleotide-binding</keyword>
<keyword id="KW-0548">Nucleotidyltransferase</keyword>
<keyword id="KW-0696">RNA-directed RNA polymerase</keyword>
<keyword id="KW-0949">S-adenosyl-L-methionine</keyword>
<keyword id="KW-0808">Transferase</keyword>
<keyword id="KW-0693">Viral RNA replication</keyword>
<keyword id="KW-0946">Virion</keyword>
<evidence type="ECO:0000250" key="1">
    <source>
        <dbReference type="UniProtKB" id="P03523"/>
    </source>
</evidence>
<evidence type="ECO:0000250" key="2">
    <source>
        <dbReference type="UniProtKB" id="P28887"/>
    </source>
</evidence>
<evidence type="ECO:0000255" key="3"/>
<evidence type="ECO:0000255" key="4">
    <source>
        <dbReference type="PROSITE-ProRule" id="PRU00539"/>
    </source>
</evidence>
<evidence type="ECO:0000255" key="5">
    <source>
        <dbReference type="PROSITE-ProRule" id="PRU00923"/>
    </source>
</evidence>
<evidence type="ECO:0000256" key="6">
    <source>
        <dbReference type="SAM" id="MobiDB-lite"/>
    </source>
</evidence>
<evidence type="ECO:0000269" key="7">
    <source>
    </source>
</evidence>
<evidence type="ECO:0000269" key="8">
    <source>
    </source>
</evidence>
<evidence type="ECO:0000269" key="9">
    <source>
    </source>
</evidence>
<evidence type="ECO:0000269" key="10">
    <source>
    </source>
</evidence>
<evidence type="ECO:0000269" key="11">
    <source>
    </source>
</evidence>
<evidence type="ECO:0000269" key="12">
    <source>
    </source>
</evidence>
<evidence type="ECO:0000269" key="13">
    <source>
    </source>
</evidence>
<evidence type="ECO:0000269" key="14">
    <source>
    </source>
</evidence>
<evidence type="ECO:0000269" key="15">
    <source>
    </source>
</evidence>
<evidence type="ECO:0000269" key="16">
    <source>
    </source>
</evidence>
<evidence type="ECO:0000305" key="17"/>
<feature type="chain" id="PRO_0000142740" description="RNA-directed RNA polymerase L">
    <location>
        <begin position="1"/>
        <end position="2228"/>
    </location>
</feature>
<feature type="domain" description="RdRp catalytic" evidence="4">
    <location>
        <begin position="656"/>
        <end position="840"/>
    </location>
</feature>
<feature type="domain" description="Mononegavirus-type SAM-dependent 2'-O-MTase" evidence="5">
    <location>
        <begin position="1771"/>
        <end position="1978"/>
    </location>
</feature>
<feature type="region of interest" description="Oligomerization domain">
    <location>
        <begin position="1"/>
        <end position="174"/>
    </location>
</feature>
<feature type="region of interest" description="Disordered" evidence="6">
    <location>
        <begin position="610"/>
        <end position="633"/>
    </location>
</feature>
<feature type="region of interest" description="Involved in mRNA cap methylation">
    <location>
        <begin position="1756"/>
        <end position="2228"/>
    </location>
</feature>
<feature type="compositionally biased region" description="Basic and acidic residues" evidence="6">
    <location>
        <begin position="616"/>
        <end position="625"/>
    </location>
</feature>
<feature type="binding site" evidence="3">
    <location>
        <begin position="1801"/>
        <end position="1810"/>
    </location>
    <ligand>
        <name>ATP</name>
        <dbReference type="ChEBI" id="CHEBI:30616"/>
    </ligand>
</feature>
<feature type="sequence variant" description="In strain: Mutant F1-R / T-5 revertant, Mutant ts-f1 and Mutant F1-R.">
    <original>Q</original>
    <variation>H</variation>
    <location>
        <position position="96"/>
    </location>
</feature>
<feature type="sequence variant" description="In strain: Mutant F1-R / T-5 revertant, Mutant ts-f1 and Mutant F1-R.">
    <original>R</original>
    <variation>S</variation>
    <location>
        <position position="581"/>
    </location>
</feature>
<feature type="sequence variant" description="In strain: Mutant F1-R / T-5 revertant and Mutant F1-R.">
    <original>E</original>
    <variation>G</variation>
    <location>
        <position position="625"/>
    </location>
</feature>
<feature type="sequence variant" description="In strain: Mutant F1-R / T-5 revertant, Mutant ts-f1 and Mutant F1-R.">
    <original>I</original>
    <variation>M</variation>
    <location>
        <position position="752"/>
    </location>
</feature>
<feature type="sequence variant" description="In strain: Mutant F1-R / T-5 revertant, Mutant ts-f1 and Mutant F1-R.">
    <original>D</original>
    <variation>G</variation>
    <location>
        <position position="971"/>
    </location>
</feature>
<feature type="sequence variant" description="In strain: Mutant F1-R / T-5 revertant, Mutant ts-f1 and Mutant F1-R.">
    <original>C</original>
    <variation>S</variation>
    <location>
        <position position="1207"/>
    </location>
</feature>
<feature type="mutagenesis site" description="Complete loss of P binding." evidence="11">
    <original>LNSPIV</original>
    <variation>ANAPAA</variation>
    <location>
        <begin position="20"/>
        <end position="25"/>
    </location>
</feature>
<feature type="mutagenesis site" description="Complete loss of P binding." evidence="11">
    <original>IAQLH</original>
    <variation>AAAAA</variation>
    <location>
        <begin position="29"/>
        <end position="33"/>
    </location>
</feature>
<feature type="mutagenesis site" description="80% loss of P binding." evidence="11">
    <original>QRTIK</original>
    <variation>ASAIA</variation>
    <location>
        <begin position="77"/>
        <end position="81"/>
    </location>
</feature>
<feature type="mutagenesis site" description="Complete loss of P binding." evidence="11">
    <original>FLTWF</original>
    <variation>AAAWA</variation>
    <location>
        <begin position="173"/>
        <end position="177"/>
    </location>
</feature>
<feature type="mutagenesis site" description="Complete loss of P binding." evidence="11">
    <original>YTLVT</original>
    <variation>AEAAA</variation>
    <location>
        <begin position="209"/>
        <end position="213"/>
    </location>
</feature>
<feature type="mutagenesis site" description="Complete loss of P binding." evidence="11">
    <original>LVLM</original>
    <variation>AAAA</variation>
    <location>
        <begin position="235"/>
        <end position="238"/>
    </location>
</feature>
<feature type="mutagenesis site" description="80% loss of P binding." evidence="11">
    <original>ITSKG</original>
    <variation>AAGRA</variation>
    <location>
        <begin position="262"/>
        <end position="266"/>
    </location>
</feature>
<feature type="mutagenesis site" description="Complete loss of P binding." evidence="11">
    <original>VIALL</original>
    <variation>AAAAA</variation>
    <location>
        <begin position="287"/>
        <end position="291"/>
    </location>
</feature>
<feature type="mutagenesis site" description="Complete loss of P binding." evidence="11">
    <original>IFH</original>
    <variation>AAA</variation>
    <location>
        <begin position="345"/>
        <end position="347"/>
    </location>
</feature>
<feature type="mutagenesis site" description="46% loss of transcription. Complete loss of replication." evidence="15">
    <original>TS</original>
    <variation>DD</variation>
    <location>
        <begin position="349"/>
        <end position="350"/>
    </location>
</feature>
<feature type="mutagenesis site" description="62% loss of transcription. complete loss of replication." evidence="15">
    <original>KA</original>
    <variation>TG</variation>
    <location>
        <begin position="354"/>
        <end position="355"/>
    </location>
</feature>
<feature type="mutagenesis site" description="Complete loss of transcription and replication." evidence="15">
    <original>R</original>
    <variation>A</variation>
    <location>
        <position position="362"/>
    </location>
</feature>
<feature type="mutagenesis site" description="Complete loss of transcription and replication." evidence="15">
    <original>T</original>
    <variation>S</variation>
    <location>
        <position position="363"/>
    </location>
</feature>
<feature type="mutagenesis site" description="Complete loss of transcription and replication." evidence="15">
    <original>H</original>
    <variation>A</variation>
    <location>
        <position position="366"/>
    </location>
</feature>
<feature type="mutagenesis site" description="Loss of phosphoprotein binding. Complete loss of transcription and replication." evidence="15">
    <original>S</original>
    <variation>R</variation>
    <location>
        <position position="368"/>
    </location>
</feature>
<feature type="mutagenesis site" description="No effect." evidence="15">
    <original>E</original>
    <variation>A</variation>
    <location>
        <position position="370"/>
    </location>
</feature>
<feature type="mutagenesis site" description="60% loss of transcription. 22% loss of replication." evidence="15">
    <original>DK</original>
    <variation>EN</variation>
    <location>
        <begin position="376"/>
        <end position="377"/>
    </location>
</feature>
<feature type="mutagenesis site" description="75% loss of replication. No loss of transcription." evidence="7">
    <original>DEE</original>
    <variation>AAA</variation>
    <location>
        <begin position="533"/>
        <end position="535"/>
    </location>
</feature>
<feature type="mutagenesis site" description="Complete loss of transcription and replication." evidence="12">
    <original>Y</original>
    <variation>E</variation>
    <variation>Q</variation>
    <location>
        <position position="540"/>
    </location>
</feature>
<feature type="mutagenesis site" description="70% loss of transcription." evidence="12">
    <original>Y</original>
    <variation>F</variation>
    <location>
        <position position="540"/>
    </location>
</feature>
<feature type="mutagenesis site" description="Complete loss of transcription and replication. No effect on template binding." evidence="7">
    <original>LK</original>
    <variation>AA</variation>
    <location>
        <begin position="542"/>
        <end position="543"/>
    </location>
</feature>
<feature type="mutagenesis site" description="Complete loss of transcription and replication." evidence="12">
    <original>K</original>
    <variation>H</variation>
    <variation>I</variation>
    <variation>L</variation>
    <variation>N</variation>
    <variation>P</variation>
    <variation>Q</variation>
    <variation>R</variation>
    <variation>S</variation>
    <variation>T</variation>
    <variation>V</variation>
    <location>
        <position position="543"/>
    </location>
</feature>
<feature type="mutagenesis site" description="Complete loss of transcription and replication. No effect on template binding." evidence="7">
    <original>EKEIK</original>
    <variation>AAAIA</variation>
    <location>
        <begin position="544"/>
        <end position="548"/>
    </location>
</feature>
<feature type="mutagenesis site" description="50% loss of transcription; complete loss of replication. No effect on template binding." evidence="7">
    <original>R</original>
    <variation>A</variation>
    <location>
        <position position="552"/>
    </location>
</feature>
<feature type="mutagenesis site" description="Complete loss of transcription and replication. No effect on template binding." evidence="7">
    <original>K</original>
    <variation>A</variation>
    <location>
        <position position="556"/>
    </location>
</feature>
<feature type="mutagenesis site" description="Complete loss of transcription and replication. No effect on template binding." evidence="7">
    <original>R</original>
    <variation>A</variation>
    <location>
        <position position="562"/>
    </location>
</feature>
<feature type="mutagenesis site" description="Complete loss of transcription and replication." evidence="7">
    <original>E</original>
    <variation>A</variation>
    <location>
        <position position="569"/>
    </location>
</feature>
<feature type="mutagenesis site" description="Complete loss od transcription and replication." evidence="12">
    <original>T</original>
    <variation>E</variation>
    <variation>K</variation>
    <location>
        <position position="661"/>
    </location>
</feature>
<feature type="mutagenesis site" description="Complete loss of transcription and replication." evidence="12">
    <original>D</original>
    <variation>G</variation>
    <variation>R</variation>
    <variation>S</variation>
    <variation>V</variation>
    <variation>Y</variation>
    <location>
        <position position="663"/>
    </location>
</feature>
<feature type="mutagenesis site" description="80% loss of transcription. Complete loss of replication." evidence="12">
    <original>K</original>
    <variation>A</variation>
    <location>
        <position position="666"/>
    </location>
</feature>
<feature type="mutagenesis site" description="Complete loss of transcription and replication." evidence="12">
    <original>K</original>
    <variation>G</variation>
    <variation>L</variation>
    <variation>V</variation>
    <location>
        <position position="666"/>
    </location>
</feature>
<feature type="mutagenesis site" description="76% loss of transcription. 40% loss of replication." evidence="12">
    <original>K</original>
    <variation>R</variation>
    <location>
        <position position="666"/>
    </location>
</feature>
<feature type="mutagenesis site" description="Complete loss of transcription and replication." evidence="12">
    <original>C</original>
    <variation>K</variation>
    <variation>L</variation>
    <location>
        <position position="668"/>
    </location>
</feature>
<feature type="mutagenesis site" description="40% loss of transcription." evidence="12">
    <original>C</original>
    <variation>Y</variation>
    <location>
        <position position="668"/>
    </location>
</feature>
<feature type="mutagenesis site" description="26% loss of transcription. No effect on replication." evidence="12">
    <original>N</original>
    <variation>E</variation>
    <location>
        <position position="734"/>
    </location>
</feature>
<feature type="mutagenesis site" description="Complete loss of transcription and replication." evidence="12">
    <original>R</original>
    <variation>D</variation>
    <variation>E</variation>
    <variation>P</variation>
    <location>
        <position position="736"/>
    </location>
</feature>
<feature type="mutagenesis site" description="80% loss of transcription. 50% increase of replication." evidence="12">
    <original>R</original>
    <variation>L</variation>
    <variation>V</variation>
    <location>
        <position position="736"/>
    </location>
</feature>
<feature type="mutagenesis site" description="13% loss of transcription. No effect on replication." evidence="12">
    <original>R</original>
    <variation>M</variation>
    <location>
        <position position="736"/>
    </location>
</feature>
<feature type="mutagenesis site" description="Complete loss of transcription. 80% loss of replication." evidence="12">
    <original>G</original>
    <variation>E</variation>
    <location>
        <position position="737"/>
    </location>
</feature>
<feature type="mutagenesis site" description="Complete loss of transcription and replication." evidence="12">
    <original>G</original>
    <variation>F</variation>
    <location>
        <position position="738"/>
    </location>
</feature>
<feature type="mutagenesis site" description="Complete loss of transcription and replication." evidence="12">
    <original>E</original>
    <variation>S</variation>
    <location>
        <position position="740"/>
    </location>
</feature>
<feature type="mutagenesis site" description="Complete loss of transcription and replication." evidence="12">
    <original>G</original>
    <variation>R</variation>
    <location>
        <position position="741"/>
    </location>
</feature>
<feature type="mutagenesis site" description="Complete loss of transcription and replication." evidence="12">
    <original>Q</original>
    <variation>K</variation>
    <location>
        <position position="744"/>
    </location>
</feature>
<feature type="mutagenesis site" description="No effect." evidence="8">
    <original>MST</original>
    <variation>LNM</variation>
    <location>
        <begin position="943"/>
        <end position="945"/>
    </location>
</feature>
<feature type="mutagenesis site" description="38% loss of transcription." evidence="8">
    <original>AVA</original>
    <variation>VTS</variation>
    <location>
        <begin position="957"/>
        <end position="959"/>
    </location>
</feature>
<feature type="mutagenesis site" description="Complete loss of transcription and replication." evidence="8">
    <original>DLKR</original>
    <variation>ALAA</variation>
    <location>
        <begin position="963"/>
        <end position="966"/>
    </location>
</feature>
<feature type="mutagenesis site" description="Complete loss of transcription and replication." evidence="8">
    <original>PHS</original>
    <variation>VCV</variation>
    <location>
        <begin position="1004"/>
        <end position="1006"/>
    </location>
</feature>
<feature type="mutagenesis site" description="70% loss of transcription and replication." evidence="8">
    <original>TII</original>
    <variation>RLL</variation>
    <location>
        <begin position="1011"/>
        <end position="1013"/>
    </location>
</feature>
<feature type="mutagenesis site" description="30% loss of transcription and replication." evidence="8">
    <original>QE</original>
    <variation>IH</variation>
    <location>
        <begin position="1023"/>
        <end position="1024"/>
    </location>
</feature>
<feature type="mutagenesis site" description="25% loss of transcription. 40% loss of replication." evidence="8">
    <original>ET</original>
    <variation>DD</variation>
    <location>
        <begin position="1036"/>
        <end position="1037"/>
    </location>
</feature>
<feature type="mutagenesis site" description="Complete loss of transcription and replication." evidence="8">
    <original>EED</original>
    <variation>AAA</variation>
    <location>
        <begin position="1040"/>
        <end position="1042"/>
    </location>
</feature>
<feature type="mutagenesis site" description="Complete loss of transcription and replication." evidence="8">
    <original>DRK</original>
    <variation>AAA</variation>
    <location>
        <begin position="1051"/>
        <end position="1053"/>
    </location>
</feature>
<feature type="mutagenesis site" description="14% loss of transcription. 48% loss of replication." evidence="8">
    <original>GN</original>
    <variation>DH</variation>
    <location>
        <begin position="1065"/>
        <end position="1066"/>
    </location>
</feature>
<feature type="mutagenesis site" description="16% loss of transcription. 66% loss of replication." evidence="8">
    <original>YGI</original>
    <variation>SRV</variation>
    <location>
        <begin position="1097"/>
        <end position="1099"/>
    </location>
</feature>
<feature type="mutagenesis site" description="70% loss of transcription." evidence="9">
    <original>TY</original>
    <variation>AR</variation>
    <location>
        <begin position="1149"/>
        <end position="1150"/>
    </location>
</feature>
<feature type="mutagenesis site" description="30% loss of transcription. 27% loss of replication." evidence="9">
    <original>EGS</original>
    <variation>RRH</variation>
    <location>
        <begin position="1172"/>
        <end position="1174"/>
    </location>
</feature>
<feature type="mutagenesis site" description="80% loss of transcription. Complete loss replication." evidence="9">
    <original>PAI</original>
    <variation>SSL</variation>
    <location>
        <begin position="1208"/>
        <end position="1210"/>
    </location>
</feature>
<feature type="mutagenesis site" description="Complete loss of transcription and replication." evidence="9">
    <original>DER</original>
    <variation>AAA</variation>
    <location>
        <begin position="1220"/>
        <end position="1222"/>
    </location>
</feature>
<feature type="mutagenesis site" description="90% loss of transcription and replication." evidence="9">
    <original>DE</original>
    <variation>AA</variation>
    <location>
        <begin position="1254"/>
        <end position="1255"/>
    </location>
</feature>
<feature type="mutagenesis site" description="86% loss of transcription. Complete loss of replication." evidence="9">
    <original>KD</original>
    <variation>AA</variation>
    <location>
        <begin position="1293"/>
        <end position="1294"/>
    </location>
</feature>
<feature type="mutagenesis site" description="15% loss of replication. 45% loss of replication." evidence="9">
    <original>SAT</original>
    <variation>GTS</variation>
    <location>
        <begin position="1303"/>
        <end position="1305"/>
    </location>
</feature>
<feature type="mutagenesis site" description="77% loss of transcription. 94% loss of replication." evidence="9">
    <original>LV</original>
    <variation>FI</variation>
    <location>
        <begin position="1333"/>
        <end position="1334"/>
    </location>
</feature>
<feature type="mutagenesis site" description="Complete loss of transcription and replication. No effect on template binding or complex formation with P protein." evidence="9">
    <original>RYKK</original>
    <variation>AAAA</variation>
    <location>
        <begin position="1351"/>
        <end position="1354"/>
    </location>
</feature>
<feature type="mutagenesis site" description="Almost no effect." evidence="16">
    <original>C</original>
    <variation>F</variation>
    <variation>L</variation>
    <variation>S</variation>
    <location>
        <position position="1571"/>
    </location>
</feature>
<feature type="mutagenesis site" description="Almost no effect." evidence="16">
    <original>C</original>
    <variation>F</variation>
    <variation>L</variation>
    <location>
        <position position="1571"/>
    </location>
</feature>
<feature type="mutagenesis site" description="80% loss of transcription and replication." evidence="16">
    <original>C</original>
    <variation>G</variation>
    <location>
        <position position="1571"/>
    </location>
</feature>
<feature type="mutagenesis site" description="Complete loss of transcription and replication." evidence="16">
    <original>C</original>
    <variation>H</variation>
    <variation>R</variation>
    <location>
        <position position="1571"/>
    </location>
</feature>
<feature type="mutagenesis site" description="30% loss of transcription." evidence="16">
    <original>C</original>
    <variation>T</variation>
    <location>
        <position position="1571"/>
    </location>
</feature>
<feature type="mutagenesis site" description="120% increase of transcription. 70% increase of replication." evidence="16">
    <original>C</original>
    <variation>V</variation>
    <location>
        <position position="1571"/>
    </location>
</feature>
<feature type="mutagenesis site" description="70% loss of transcription. Complete loss of replication." evidence="16">
    <original>C</original>
    <variation>Y</variation>
    <location>
        <position position="1571"/>
    </location>
</feature>
<feature type="mutagenesis site" description="80% loss of transcription. 27% loss of replication." evidence="8">
    <original>KDR</original>
    <variation>AAA</variation>
    <location>
        <begin position="1798"/>
        <end position="1800"/>
    </location>
</feature>
<feature type="mutagenesis site" description="Complete loss of transcription and replication." evidence="8">
    <original>DAT</original>
    <variation>KEI</variation>
    <location>
        <begin position="1815"/>
        <end position="1817"/>
    </location>
</feature>
<feature type="mutagenesis site" description="Complete loss of transcription and replication." evidence="8">
    <original>RE</original>
    <variation>AA</variation>
    <location>
        <begin position="1838"/>
        <end position="1839"/>
    </location>
</feature>
<reference key="1">
    <citation type="journal article" date="1986" name="Nucleic Acids Res.">
        <title>Determination of the complete nucleotide sequence of the Sendai virus genome RNA and the predicted amino acid sequences of the F, HN and L proteins.</title>
        <authorList>
            <person name="Shioda T."/>
            <person name="Iwasaki K."/>
            <person name="Shibuta H."/>
        </authorList>
    </citation>
    <scope>NUCLEOTIDE SEQUENCE [GENOMIC RNA]</scope>
</reference>
<reference key="2">
    <citation type="journal article" date="1990" name="Virology">
        <title>Nucleotide sequence analyses of the genes encoding the HN, M, NP, P, and L proteins of two host range mutants of Sendai virus.</title>
        <authorList>
            <person name="Middleton Y."/>
            <person name="Tashiro M."/>
            <person name="Thai T."/>
            <person name="Oh J."/>
            <person name="Seymour J."/>
            <person name="Pritzer E."/>
            <person name="Klenk H.-D."/>
            <person name="Rott R."/>
            <person name="Seto J.T."/>
        </authorList>
    </citation>
    <scope>NUCLEOTIDE SEQUENCE [GENOMIC RNA]</scope>
    <source>
        <strain>Mutant F1-R</strain>
        <strain>Mutant ts-f1</strain>
    </source>
</reference>
<reference key="3">
    <citation type="submission" date="1998-10" db="EMBL/GenBank/DDBJ databases">
        <authorList>
            <person name="Middleton Y."/>
        </authorList>
    </citation>
    <scope>SEQUENCE REVISION TO 581 AND 971</scope>
</reference>
<reference key="4">
    <citation type="journal article" date="1991" name="Virology">
        <title>Pneumotropic revertants derived from a pantropic mutant, F1-R, of Sendai virus.</title>
        <authorList>
            <person name="Tashiro M."/>
            <person name="James I."/>
            <person name="Karri S."/>
            <person name="Wahn K."/>
            <person name="Tobita K."/>
            <person name="Klenk H.-D."/>
            <person name="Rott R."/>
            <person name="Seto J.T."/>
        </authorList>
    </citation>
    <scope>NUCLEOTIDE SEQUENCE [GENOMIC RNA]</scope>
    <source>
        <strain>Mutant F1-R / T-5 revertant</strain>
    </source>
</reference>
<reference key="5">
    <citation type="journal article" date="1992" name="J. Virol.">
        <title>Complexes of Sendai virus NP-P and P-L proteins are required for defective interfering particle genome replication in vitro.</title>
        <authorList>
            <person name="Horikami S.M."/>
            <person name="Curran J."/>
            <person name="Kolakofsky D."/>
            <person name="Moyer S.A."/>
        </authorList>
    </citation>
    <scope>INTERACTION WITH P PROTEIN</scope>
</reference>
<reference key="6">
    <citation type="journal article" date="1995" name="Virology">
        <title>Alternative amino acids at a single site in the Sendai virus L protein produce multiple defects in RNA synthesis in vitro.</title>
        <authorList>
            <person name="Horikami S.M."/>
            <person name="Moyer S.A."/>
        </authorList>
    </citation>
    <scope>MUTAGENESIS OF CYS-1571</scope>
</reference>
<reference key="7">
    <citation type="journal article" date="1995" name="Virology">
        <title>Mutations in conserved domain I of the Sendai virus L polymerase protein uncouple transcription and replication.</title>
        <authorList>
            <person name="Chandrika R."/>
            <person name="Horikami S.M."/>
            <person name="Smallwood S."/>
            <person name="Moyer S.A."/>
        </authorList>
    </citation>
    <scope>INTERACTION WITH P PROTEIN</scope>
    <scope>MUTAGENESIS OF 349-THR-SER-350; 354-LYS-ALA-355; ARG-362; THR-363; HIS-366; SER-368; GLU-370 AND 376-ASP-LYS-377</scope>
</reference>
<reference key="8">
    <citation type="journal article" date="1999" name="Virology">
        <title>Mutations in conserved domain II of the large (L) subunit of the Sendai virus RNA polymerase abolish RNA synthesis.</title>
        <authorList>
            <person name="Smallwood S."/>
            <person name="Easson C.D."/>
            <person name="Feller J.A."/>
            <person name="Horikami S.M."/>
            <person name="Moyer S.A."/>
        </authorList>
    </citation>
    <scope>MUTAGENESIS OF 533-ASP--GLU-535; 542-LEU-LYS-543; 544-ASP--LYS-548; ARG-552; LYS-556; ARG-562 AND GLU-569</scope>
</reference>
<reference key="9">
    <citation type="journal article" date="2000" name="Virology">
        <title>Mutations in domain V of the Sendai virus L polymerase protein uncouple transcription and replication and differentially affect replication in vitro and in vivo.</title>
        <authorList>
            <person name="Cortese C.K."/>
            <person name="Feller J.A."/>
            <person name="Moyer S.A."/>
        </authorList>
    </citation>
    <scope>FUNCTION</scope>
    <scope>MUTAGENESIS OF 1149-THR-TYR-1150; 1172-GLU--SER-1174; 1208-PRO--ILE-1210; 1220-ASP--ARG-1222; 1254-ASP-GLU-1255; 1293-LYS-ASP-1294; 1303-SER--THR-1305; 1333-LEU-VAL-1334 AND 1351-ARG--LYS-1354</scope>
</reference>
<reference key="10">
    <citation type="journal article" date="2000" name="Virology">
        <title>Mutations in conserved domains IV and VI of the large (L) subunit of the Sendai virus RNA polymerase give a spectrum of defective RNA synthesis phenotypes.</title>
        <authorList>
            <person name="Feller J.A."/>
            <person name="Smallwood S."/>
            <person name="Horikami S.M."/>
            <person name="Moyer S.A."/>
        </authorList>
    </citation>
    <scope>MUTAGENESIS OF 943-MET--THR-945; 957-ALA--ALA-959; 963-ASP--ARG-966; 1004-PRO--SER-1006; 1011-THR--ILE-1013; 1023-GLN-GLU-1024; 1036-GLU-THR-1037; 1040-GLU--ASP-1042; 1051-ASP--LYS-1053; 1065-GLY-ASN-1066; 1097-TYR--ILE-1099; 1798-LYS--ARG-1800; 1815-ASP--THR-1817 AND 1838-ARG-GLU-1839</scope>
</reference>
<reference key="11">
    <citation type="journal article" date="2001" name="Virology">
        <title>Sendai virus wild-type and mutant C proteins show a direct correlation between L polymerase binding and inhibition of viral RNA synthesis.</title>
        <authorList>
            <person name="Grogan C.C."/>
            <person name="Moyer S.A."/>
        </authorList>
    </citation>
    <scope>INTERACTION WITH C PROTEIN</scope>
</reference>
<reference key="12">
    <citation type="journal article" date="2002" name="J. Virol.">
        <title>The phosphoprotein (P) binding site resides in the N-terminus of the L polymerase subunit of Sendai virus.</title>
        <authorList>
            <person name="Holmes D.E."/>
            <person name="Moyer S.A."/>
        </authorList>
    </citation>
    <scope>INTERACTION WITH P PROTEIN</scope>
    <scope>MUTAGENESIS OF 20-SER--VAL-25; 29-ILE--HIS-33; 77-GLN--LYS-81; 173-PHE--PHE-177; 209-TYR--THR-213; 235-LEU--MET-238; 262-ILE--GLY-266; 287-VAL--LEU-291 AND 345-ILE--HIS-347</scope>
</reference>
<reference key="13">
    <citation type="journal article" date="2002" name="Virology">
        <title>Different substitutions at conserved amino acids in domains II and III in the Sendai L RNA polymerase protein inactivate viral RNA synthesis.</title>
        <authorList>
            <person name="Smallwood S."/>
            <person name="Hoevel T."/>
            <person name="Neubert W.J."/>
            <person name="Moyer S.A."/>
        </authorList>
    </citation>
    <scope>MUTAGENESIS OF TYR-540; LYS-543; THR-661; ASP-663; LYS-666; CYS-668; ASN-734; ARG-736; GLY-737; GLY-738; GLU-740; GLY-741 AND GLN-744</scope>
</reference>
<reference key="14">
    <citation type="journal article" date="2003" name="Virology">
        <title>The L-L oligomerization domain resides at the very N-terminus of the Sendai virus L RNA polymerase protein.</title>
        <authorList>
            <person name="Cevik B."/>
            <person name="Smallwood S."/>
            <person name="Moyer S.A."/>
        </authorList>
    </citation>
    <scope>OLIGOMERIZATION</scope>
</reference>
<reference key="15">
    <citation type="journal article" date="2005" name="J. Biol. Chem.">
        <title>Sendai virus RNA-dependent RNA Polymerase L protein catalyzes cap methylation of virus-specific mRNA.</title>
        <authorList>
            <person name="Ogino T."/>
            <person name="Kobayashi M."/>
            <person name="Iwama M."/>
            <person name="Mizumoto K."/>
        </authorList>
    </citation>
    <scope>FUNCTION</scope>
    <scope>MRNA (GUANINE-N(7)-)-METHYLTRANSFERASE ACTIVITY</scope>
</reference>
<accession>P06447</accession>
<accession>P27566</accession>
<accession>Q84185</accession>
<accession>Q98705</accession>
<gene>
    <name type="primary">L</name>
</gene>
<proteinExistence type="evidence at protein level"/>
<organism>
    <name type="scientific">Sendai virus (strain Z)</name>
    <name type="common">SeV</name>
    <name type="synonym">Sendai virus (strain HVJ)</name>
    <dbReference type="NCBI Taxonomy" id="11198"/>
    <lineage>
        <taxon>Viruses</taxon>
        <taxon>Riboviria</taxon>
        <taxon>Orthornavirae</taxon>
        <taxon>Negarnaviricota</taxon>
        <taxon>Haploviricotina</taxon>
        <taxon>Monjiviricetes</taxon>
        <taxon>Mononegavirales</taxon>
        <taxon>Paramyxoviridae</taxon>
        <taxon>Feraresvirinae</taxon>
        <taxon>Respirovirus</taxon>
        <taxon>Respirovirus muris</taxon>
    </lineage>
</organism>
<comment type="function">
    <text evidence="1 9 14">RNA-directed RNA polymerase that catalyzes the transcription of viral mRNAs, their capping and polyadenylation. The template is composed of the viral RNA tightly encapsidated by the nucleoprotein (N). The viral polymerase binds to the genomic RNA at the 3' leader promoter, and transcribes subsequently all viral mRNAs with a decreasing efficiency. The first gene is the most transcribed, and the last the least transcribed. The viral phosphoprotein acts as a processivity factor. Capping is concomitant with initiation of mRNA transcription. Indeed, a GDP polyribonucleotidyl transferase (PRNTase) adds the cap structure when the nascent RNA chain length has reached few nucleotides. Ribose 2'-O methylation of viral mRNA cap precedes and facilitates subsequent guanine-N-7 methylation, both activities being carried by the viral polymerase. Polyadenylation of mRNAs occur by a stuttering mechanism at a slipery stop site present at the end viral genes. After finishing transcription of a mRNA, the polymerase can resume transcription of the downstream gene.</text>
</comment>
<comment type="function">
    <text evidence="1">RNA-directed RNA polymerase that catalyzes the replication of viral genomic RNA. The template is composed of the viral RNA tightly encapsidated by the nucleoprotein (N). The replicase mode is dependent on intracellular N protein concentration. In this mode, the polymerase replicates the whole viral genome without recognizing transcriptional signals, and the replicated genome is not caped or polyadenylated.</text>
</comment>
<comment type="catalytic activity">
    <reaction evidence="4">
        <text>RNA(n) + a ribonucleoside 5'-triphosphate = RNA(n+1) + diphosphate</text>
        <dbReference type="Rhea" id="RHEA:21248"/>
        <dbReference type="Rhea" id="RHEA-COMP:14527"/>
        <dbReference type="Rhea" id="RHEA-COMP:17342"/>
        <dbReference type="ChEBI" id="CHEBI:33019"/>
        <dbReference type="ChEBI" id="CHEBI:61557"/>
        <dbReference type="ChEBI" id="CHEBI:140395"/>
        <dbReference type="EC" id="2.7.7.48"/>
    </reaction>
</comment>
<comment type="catalytic activity">
    <reaction evidence="14">
        <text>a 5'-end (5'-triphosphoguanosine)-adenylyl-adenylyl-cytidylyl-adenosine in mRNA + 2 S-adenosyl-L-methionine = a 5'-end (N(7)-methyl 5'-triphosphoguanosine)-(2'-O-methyladenylyl)-adenylyl-cytidylyl-adenosine in mRNA + 2 S-adenosyl-L-homocysteine + H(+)</text>
        <dbReference type="Rhea" id="RHEA:65376"/>
        <dbReference type="Rhea" id="RHEA-COMP:16797"/>
        <dbReference type="Rhea" id="RHEA-COMP:16798"/>
        <dbReference type="ChEBI" id="CHEBI:15378"/>
        <dbReference type="ChEBI" id="CHEBI:57856"/>
        <dbReference type="ChEBI" id="CHEBI:59789"/>
        <dbReference type="ChEBI" id="CHEBI:156483"/>
        <dbReference type="ChEBI" id="CHEBI:156484"/>
        <dbReference type="EC" id="2.1.1.375"/>
    </reaction>
</comment>
<comment type="catalytic activity">
    <reaction evidence="14">
        <text>a 5'-end (5'-triphosphoguanosine)-adenylyl-adenylyl-cytidylyl-adenosine in mRNA + S-adenosyl-L-methionine = a 5'-end (5'-triphosphoguanosine)-(2'-O-methyladenylyl)-adenylyl-cytidylyl-adenosine in mRNA + S-adenosyl-L-homocysteine + H(+)</text>
        <dbReference type="Rhea" id="RHEA:65380"/>
        <dbReference type="Rhea" id="RHEA-COMP:16797"/>
        <dbReference type="Rhea" id="RHEA-COMP:16801"/>
        <dbReference type="ChEBI" id="CHEBI:15378"/>
        <dbReference type="ChEBI" id="CHEBI:57856"/>
        <dbReference type="ChEBI" id="CHEBI:59789"/>
        <dbReference type="ChEBI" id="CHEBI:156482"/>
        <dbReference type="ChEBI" id="CHEBI:156484"/>
    </reaction>
</comment>
<comment type="catalytic activity">
    <reaction evidence="2">
        <text>a 5'-end triphospho-adenylyl-adenylyl-cytidylyl-adenosine in mRNA + GDP + H(+) = a 5'-end (5'-triphosphoguanosine)-adenylyl-adenylyl-cytidylyl-adenosine in mRNA + diphosphate</text>
        <dbReference type="Rhea" id="RHEA:65436"/>
        <dbReference type="Rhea" id="RHEA-COMP:16797"/>
        <dbReference type="Rhea" id="RHEA-COMP:16799"/>
        <dbReference type="ChEBI" id="CHEBI:15378"/>
        <dbReference type="ChEBI" id="CHEBI:33019"/>
        <dbReference type="ChEBI" id="CHEBI:58189"/>
        <dbReference type="ChEBI" id="CHEBI:156484"/>
        <dbReference type="ChEBI" id="CHEBI:156503"/>
        <dbReference type="EC" id="2.7.7.88"/>
    </reaction>
</comment>
<comment type="catalytic activity">
    <reaction evidence="1">
        <text>a 5'-end (5'-triphosphoguanosine)-(2'-O-methyladenylyl)-adenylyl-cytidylyl-adenosine in mRNA + S-adenosyl-L-methionine = a 5'-end (N(7)-methyl 5'-triphosphoguanosine)-(2'-O-methyladenylyl)-adenylyl-cytidylyl-adenosine in mRNA + S-adenosyl-L-homocysteine</text>
        <dbReference type="Rhea" id="RHEA:65440"/>
        <dbReference type="Rhea" id="RHEA-COMP:16798"/>
        <dbReference type="Rhea" id="RHEA-COMP:16801"/>
        <dbReference type="ChEBI" id="CHEBI:57856"/>
        <dbReference type="ChEBI" id="CHEBI:59789"/>
        <dbReference type="ChEBI" id="CHEBI:156482"/>
        <dbReference type="ChEBI" id="CHEBI:156483"/>
    </reaction>
</comment>
<comment type="catalytic activity">
    <reaction evidence="2">
        <text>GTP + H2O = GDP + phosphate + H(+)</text>
        <dbReference type="Rhea" id="RHEA:19669"/>
        <dbReference type="ChEBI" id="CHEBI:15377"/>
        <dbReference type="ChEBI" id="CHEBI:15378"/>
        <dbReference type="ChEBI" id="CHEBI:37565"/>
        <dbReference type="ChEBI" id="CHEBI:43474"/>
        <dbReference type="ChEBI" id="CHEBI:58189"/>
    </reaction>
</comment>
<comment type="biophysicochemical properties">
    <phDependence>
        <text>Optimum pH is 6 for mRNA (guanine-N(7)-)-methyltransferase activity.</text>
    </phDependence>
    <temperatureDependence>
        <text>Optimum temperature is 30 degrees Celsius.</text>
    </temperatureDependence>
</comment>
<comment type="subunit">
    <text evidence="10 11 13 15">Homooligomer. Interacts with the P and C proteins. The L protein complexes with P protein to form the functional polymerase. C protein binding to L has an inhibitory effect.</text>
</comment>
<comment type="subcellular location">
    <subcellularLocation>
        <location evidence="17">Virion</location>
    </subcellularLocation>
    <subcellularLocation>
        <location>Host cytoplasm</location>
    </subcellularLocation>
</comment>
<comment type="domain">
    <text>The N-terminal part (about 1-400) seems to be involved in binding to the P protein.</text>
</comment>
<comment type="miscellaneous">
    <text>Least abundant structural protein (approximately 50 copies per virion). Unstable in the absence of P protein.</text>
</comment>
<comment type="similarity">
    <text evidence="17">Belongs to the paramyxovirus L protein family.</text>
</comment>
<comment type="caution">
    <text evidence="17">PubMed:11861877 sequence used for mutagenesis is in conflict with the sequence shown in positions 29, 210, 211, 262, 263 and 264.</text>
</comment>
<comment type="sequence caution" evidence="17">
    <conflict type="erroneous initiation">
        <sequence resource="EMBL-CDS" id="CAA27272"/>
    </conflict>
</comment>